<organism>
    <name type="scientific">Coxiella burnetii (strain CbuG_Q212)</name>
    <name type="common">Coxiella burnetii (strain Q212)</name>
    <dbReference type="NCBI Taxonomy" id="434923"/>
    <lineage>
        <taxon>Bacteria</taxon>
        <taxon>Pseudomonadati</taxon>
        <taxon>Pseudomonadota</taxon>
        <taxon>Gammaproteobacteria</taxon>
        <taxon>Legionellales</taxon>
        <taxon>Coxiellaceae</taxon>
        <taxon>Coxiella</taxon>
    </lineage>
</organism>
<evidence type="ECO:0000255" key="1">
    <source>
        <dbReference type="HAMAP-Rule" id="MF_00210"/>
    </source>
</evidence>
<proteinExistence type="inferred from homology"/>
<feature type="chain" id="PRO_1000099695" description="3-phosphoshikimate 1-carboxyvinyltransferase">
    <location>
        <begin position="1"/>
        <end position="438"/>
    </location>
</feature>
<feature type="active site" description="Proton acceptor" evidence="1">
    <location>
        <position position="315"/>
    </location>
</feature>
<feature type="binding site" evidence="1">
    <location>
        <position position="21"/>
    </location>
    <ligand>
        <name>3-phosphoshikimate</name>
        <dbReference type="ChEBI" id="CHEBI:145989"/>
    </ligand>
</feature>
<feature type="binding site" evidence="1">
    <location>
        <position position="21"/>
    </location>
    <ligand>
        <name>phosphoenolpyruvate</name>
        <dbReference type="ChEBI" id="CHEBI:58702"/>
    </ligand>
</feature>
<feature type="binding site" evidence="1">
    <location>
        <position position="22"/>
    </location>
    <ligand>
        <name>3-phosphoshikimate</name>
        <dbReference type="ChEBI" id="CHEBI:145989"/>
    </ligand>
</feature>
<feature type="binding site" evidence="1">
    <location>
        <position position="26"/>
    </location>
    <ligand>
        <name>3-phosphoshikimate</name>
        <dbReference type="ChEBI" id="CHEBI:145989"/>
    </ligand>
</feature>
<feature type="binding site" evidence="1">
    <location>
        <position position="95"/>
    </location>
    <ligand>
        <name>phosphoenolpyruvate</name>
        <dbReference type="ChEBI" id="CHEBI:58702"/>
    </ligand>
</feature>
<feature type="binding site" evidence="1">
    <location>
        <position position="123"/>
    </location>
    <ligand>
        <name>phosphoenolpyruvate</name>
        <dbReference type="ChEBI" id="CHEBI:58702"/>
    </ligand>
</feature>
<feature type="binding site" evidence="1">
    <location>
        <position position="167"/>
    </location>
    <ligand>
        <name>3-phosphoshikimate</name>
        <dbReference type="ChEBI" id="CHEBI:145989"/>
    </ligand>
</feature>
<feature type="binding site" evidence="1">
    <location>
        <position position="169"/>
    </location>
    <ligand>
        <name>3-phosphoshikimate</name>
        <dbReference type="ChEBI" id="CHEBI:145989"/>
    </ligand>
</feature>
<feature type="binding site" evidence="1">
    <location>
        <position position="169"/>
    </location>
    <ligand>
        <name>phosphoenolpyruvate</name>
        <dbReference type="ChEBI" id="CHEBI:58702"/>
    </ligand>
</feature>
<feature type="binding site" evidence="1">
    <location>
        <position position="315"/>
    </location>
    <ligand>
        <name>3-phosphoshikimate</name>
        <dbReference type="ChEBI" id="CHEBI:145989"/>
    </ligand>
</feature>
<feature type="binding site" evidence="1">
    <location>
        <position position="342"/>
    </location>
    <ligand>
        <name>3-phosphoshikimate</name>
        <dbReference type="ChEBI" id="CHEBI:145989"/>
    </ligand>
</feature>
<feature type="binding site" evidence="1">
    <location>
        <position position="346"/>
    </location>
    <ligand>
        <name>phosphoenolpyruvate</name>
        <dbReference type="ChEBI" id="CHEBI:58702"/>
    </ligand>
</feature>
<feature type="binding site" evidence="1">
    <location>
        <position position="387"/>
    </location>
    <ligand>
        <name>phosphoenolpyruvate</name>
        <dbReference type="ChEBI" id="CHEBI:58702"/>
    </ligand>
</feature>
<sequence>MDYQTIPSQGLSGEICVPGDKSISHRAVLLAAIAEGQTQVDGFLMGADNLAMVSALQQMGASIQVIEDENILVVEGVGMTGLQAPSEALDCGNSGTAIRLLSGLLAGQPFNTVLTGDSSLQRRPMKRIIDPLTLMGAKIDSTGNVPPLKIYGNPRLTGIHYQLPMASAQVKSCLLLAGLYARGKTCITEPAPSRDHTERLLKHFHYTLQKDKQSICVSGGGKLKANDISIPGDISSAAFFIVAATITPGSAIRLCRVGVNPTRLGVINLLKMMGADIEVTHYTEKNEEPTADITVRHARLKGIDIPPDQVPLTIDEFPVLLIAAAVAQGKTVLRDGAELRVKETDRIAAMVDGLQKLGIAAESLPDGVIIQGGTLEGGEVNSYDDHRIAMAFAVAGTLAKGPVRIRNCDNVKTSFPNFVELANEVGMNVKGVRGRGGF</sequence>
<name>AROA_COXB2</name>
<protein>
    <recommendedName>
        <fullName evidence="1">3-phosphoshikimate 1-carboxyvinyltransferase</fullName>
        <ecNumber evidence="1">2.5.1.19</ecNumber>
    </recommendedName>
    <alternativeName>
        <fullName evidence="1">5-enolpyruvylshikimate-3-phosphate synthase</fullName>
        <shortName evidence="1">EPSP synthase</shortName>
        <shortName evidence="1">EPSPS</shortName>
    </alternativeName>
</protein>
<keyword id="KW-0028">Amino-acid biosynthesis</keyword>
<keyword id="KW-0057">Aromatic amino acid biosynthesis</keyword>
<keyword id="KW-0963">Cytoplasm</keyword>
<keyword id="KW-0808">Transferase</keyword>
<comment type="function">
    <text evidence="1">Catalyzes the transfer of the enolpyruvyl moiety of phosphoenolpyruvate (PEP) to the 5-hydroxyl of shikimate-3-phosphate (S3P) to produce enolpyruvyl shikimate-3-phosphate and inorganic phosphate.</text>
</comment>
<comment type="catalytic activity">
    <reaction evidence="1">
        <text>3-phosphoshikimate + phosphoenolpyruvate = 5-O-(1-carboxyvinyl)-3-phosphoshikimate + phosphate</text>
        <dbReference type="Rhea" id="RHEA:21256"/>
        <dbReference type="ChEBI" id="CHEBI:43474"/>
        <dbReference type="ChEBI" id="CHEBI:57701"/>
        <dbReference type="ChEBI" id="CHEBI:58702"/>
        <dbReference type="ChEBI" id="CHEBI:145989"/>
        <dbReference type="EC" id="2.5.1.19"/>
    </reaction>
    <physiologicalReaction direction="left-to-right" evidence="1">
        <dbReference type="Rhea" id="RHEA:21257"/>
    </physiologicalReaction>
</comment>
<comment type="pathway">
    <text evidence="1">Metabolic intermediate biosynthesis; chorismate biosynthesis; chorismate from D-erythrose 4-phosphate and phosphoenolpyruvate: step 6/7.</text>
</comment>
<comment type="subunit">
    <text evidence="1">Monomer.</text>
</comment>
<comment type="subcellular location">
    <subcellularLocation>
        <location evidence="1">Cytoplasm</location>
    </subcellularLocation>
</comment>
<comment type="similarity">
    <text evidence="1">Belongs to the EPSP synthase family.</text>
</comment>
<dbReference type="EC" id="2.5.1.19" evidence="1"/>
<dbReference type="EMBL" id="CP001019">
    <property type="protein sequence ID" value="ACJ18767.1"/>
    <property type="molecule type" value="Genomic_DNA"/>
</dbReference>
<dbReference type="RefSeq" id="WP_012570275.1">
    <property type="nucleotide sequence ID" value="NC_011527.1"/>
</dbReference>
<dbReference type="SMR" id="B6J1D9"/>
<dbReference type="KEGG" id="cbg:CbuG_1468"/>
<dbReference type="HOGENOM" id="CLU_024321_0_1_6"/>
<dbReference type="UniPathway" id="UPA00053">
    <property type="reaction ID" value="UER00089"/>
</dbReference>
<dbReference type="GO" id="GO:0005737">
    <property type="term" value="C:cytoplasm"/>
    <property type="evidence" value="ECO:0007669"/>
    <property type="project" value="UniProtKB-SubCell"/>
</dbReference>
<dbReference type="GO" id="GO:0003866">
    <property type="term" value="F:3-phosphoshikimate 1-carboxyvinyltransferase activity"/>
    <property type="evidence" value="ECO:0007669"/>
    <property type="project" value="UniProtKB-UniRule"/>
</dbReference>
<dbReference type="GO" id="GO:0008652">
    <property type="term" value="P:amino acid biosynthetic process"/>
    <property type="evidence" value="ECO:0007669"/>
    <property type="project" value="UniProtKB-KW"/>
</dbReference>
<dbReference type="GO" id="GO:0009073">
    <property type="term" value="P:aromatic amino acid family biosynthetic process"/>
    <property type="evidence" value="ECO:0007669"/>
    <property type="project" value="UniProtKB-KW"/>
</dbReference>
<dbReference type="GO" id="GO:0009423">
    <property type="term" value="P:chorismate biosynthetic process"/>
    <property type="evidence" value="ECO:0007669"/>
    <property type="project" value="UniProtKB-UniRule"/>
</dbReference>
<dbReference type="CDD" id="cd01556">
    <property type="entry name" value="EPSP_synthase"/>
    <property type="match status" value="1"/>
</dbReference>
<dbReference type="FunFam" id="3.65.10.10:FF:000005">
    <property type="entry name" value="3-phosphoshikimate 1-carboxyvinyltransferase"/>
    <property type="match status" value="1"/>
</dbReference>
<dbReference type="FunFam" id="3.65.10.10:FF:000006">
    <property type="entry name" value="3-phosphoshikimate 1-carboxyvinyltransferase"/>
    <property type="match status" value="1"/>
</dbReference>
<dbReference type="Gene3D" id="3.65.10.10">
    <property type="entry name" value="Enolpyruvate transferase domain"/>
    <property type="match status" value="2"/>
</dbReference>
<dbReference type="HAMAP" id="MF_00210">
    <property type="entry name" value="EPSP_synth"/>
    <property type="match status" value="1"/>
</dbReference>
<dbReference type="InterPro" id="IPR001986">
    <property type="entry name" value="Enolpyruvate_Tfrase_dom"/>
</dbReference>
<dbReference type="InterPro" id="IPR036968">
    <property type="entry name" value="Enolpyruvate_Tfrase_sf"/>
</dbReference>
<dbReference type="InterPro" id="IPR006264">
    <property type="entry name" value="EPSP_synthase"/>
</dbReference>
<dbReference type="InterPro" id="IPR023193">
    <property type="entry name" value="EPSP_synthase_CS"/>
</dbReference>
<dbReference type="InterPro" id="IPR013792">
    <property type="entry name" value="RNA3'P_cycl/enolpyr_Trfase_a/b"/>
</dbReference>
<dbReference type="NCBIfam" id="TIGR01356">
    <property type="entry name" value="aroA"/>
    <property type="match status" value="1"/>
</dbReference>
<dbReference type="PANTHER" id="PTHR21090">
    <property type="entry name" value="AROM/DEHYDROQUINATE SYNTHASE"/>
    <property type="match status" value="1"/>
</dbReference>
<dbReference type="PANTHER" id="PTHR21090:SF5">
    <property type="entry name" value="PENTAFUNCTIONAL AROM POLYPEPTIDE"/>
    <property type="match status" value="1"/>
</dbReference>
<dbReference type="Pfam" id="PF00275">
    <property type="entry name" value="EPSP_synthase"/>
    <property type="match status" value="1"/>
</dbReference>
<dbReference type="PIRSF" id="PIRSF000505">
    <property type="entry name" value="EPSPS"/>
    <property type="match status" value="1"/>
</dbReference>
<dbReference type="SUPFAM" id="SSF55205">
    <property type="entry name" value="EPT/RTPC-like"/>
    <property type="match status" value="1"/>
</dbReference>
<dbReference type="PROSITE" id="PS00104">
    <property type="entry name" value="EPSP_SYNTHASE_1"/>
    <property type="match status" value="1"/>
</dbReference>
<dbReference type="PROSITE" id="PS00885">
    <property type="entry name" value="EPSP_SYNTHASE_2"/>
    <property type="match status" value="1"/>
</dbReference>
<reference key="1">
    <citation type="journal article" date="2009" name="Infect. Immun.">
        <title>Comparative genomics reveal extensive transposon-mediated genomic plasticity and diversity among potential effector proteins within the genus Coxiella.</title>
        <authorList>
            <person name="Beare P.A."/>
            <person name="Unsworth N."/>
            <person name="Andoh M."/>
            <person name="Voth D.E."/>
            <person name="Omsland A."/>
            <person name="Gilk S.D."/>
            <person name="Williams K.P."/>
            <person name="Sobral B.W."/>
            <person name="Kupko J.J. III"/>
            <person name="Porcella S.F."/>
            <person name="Samuel J.E."/>
            <person name="Heinzen R.A."/>
        </authorList>
    </citation>
    <scope>NUCLEOTIDE SEQUENCE [LARGE SCALE GENOMIC DNA]</scope>
    <source>
        <strain>CbuG_Q212</strain>
    </source>
</reference>
<accession>B6J1D9</accession>
<gene>
    <name evidence="1" type="primary">aroA</name>
    <name type="ordered locus">CbuG_1468</name>
</gene>